<proteinExistence type="evidence at protein level"/>
<sequence length="192" mass="21863">MKTILSNQTVDIPENVDITLKGRTVIVKGPRGTLRRDFNHINVELSLLGKKKKRLRVDKWWGNRKELATVRTICSHVQNMIKGVTLGFRYKMRSVYAHFPINVVIQENGSLVEIRNFLGEKYIRRVRMRPGVACSVSQAQKDELILEGNDIELVSNSAALIQQATTVKNKDIRKFLDGIYVSEKGTVQQADE</sequence>
<reference key="1">
    <citation type="journal article" date="1993" name="Nucleic Acids Res.">
        <title>A new human ribosomal protein sequence, homologue of rat L9.</title>
        <authorList>
            <person name="Hori N."/>
            <person name="Murakawa K."/>
            <person name="Matoba R."/>
            <person name="Fukushima A."/>
            <person name="Okubo K."/>
            <person name="Matsubara K."/>
        </authorList>
    </citation>
    <scope>NUCLEOTIDE SEQUENCE [MRNA]</scope>
    <source>
        <tissue>Liver</tissue>
    </source>
</reference>
<reference key="2">
    <citation type="journal article" date="1996" name="Biochim. Biophys. Acta">
        <title>Structural organization and chromosomal localization of the human ribosomal protein L9 gene.</title>
        <authorList>
            <person name="Mazuruk K."/>
            <person name="Schoen T.J."/>
            <person name="Chader G.J."/>
            <person name="Iwata T."/>
            <person name="Rodriguez I.R."/>
        </authorList>
    </citation>
    <scope>NUCLEOTIDE SEQUENCE [MRNA]</scope>
    <source>
        <tissue>Retina</tissue>
    </source>
</reference>
<reference key="3">
    <citation type="submission" date="1995-02" db="EMBL/GenBank/DDBJ databases">
        <title>Human homolog of rat ribosomal protein L9.</title>
        <authorList>
            <person name="Williams J.H."/>
            <person name="Pearse M.J."/>
            <person name="Power D.A."/>
        </authorList>
    </citation>
    <scope>NUCLEOTIDE SEQUENCE [MRNA]</scope>
</reference>
<reference key="4">
    <citation type="submission" date="2001-05" db="EMBL/GenBank/DDBJ databases">
        <title>Identification of immuno-peptidmics that are recognized by tumor-reactive CTL generated from TIL of colon cancer patients.</title>
        <authorList>
            <person name="Shichijo S."/>
            <person name="Itoh K."/>
        </authorList>
    </citation>
    <scope>NUCLEOTIDE SEQUENCE [LARGE SCALE MRNA]</scope>
    <source>
        <tissue>Colon adenocarcinoma</tissue>
    </source>
</reference>
<reference key="5">
    <citation type="journal article" date="2004" name="Genome Res.">
        <title>The status, quality, and expansion of the NIH full-length cDNA project: the Mammalian Gene Collection (MGC).</title>
        <authorList>
            <consortium name="The MGC Project Team"/>
        </authorList>
    </citation>
    <scope>NUCLEOTIDE SEQUENCE [LARGE SCALE MRNA]</scope>
    <source>
        <tissue>Brain</tissue>
        <tissue>Muscle</tissue>
        <tissue>Placenta</tissue>
        <tissue>Uterus</tissue>
    </source>
</reference>
<reference key="6">
    <citation type="submission" date="2010-01" db="UniProtKB">
        <authorList>
            <person name="Bienvenut W.V."/>
            <person name="Bilsland A.E."/>
            <person name="Keith W.N."/>
        </authorList>
    </citation>
    <scope>PROTEIN SEQUENCE OF 1-21; 36-51; 94-115; 142-168 AND 174-184</scope>
    <scope>IDENTIFICATION BY MASS SPECTROMETRY</scope>
    <source>
        <tissue>Colon carcinoma</tissue>
    </source>
</reference>
<reference key="7">
    <citation type="journal article" date="1998" name="Genome Res.">
        <title>A map of 75 human ribosomal protein genes.</title>
        <authorList>
            <person name="Kenmochi N."/>
            <person name="Kawaguchi T."/>
            <person name="Rozen S."/>
            <person name="Davis E."/>
            <person name="Goodman N."/>
            <person name="Hudson T.J."/>
            <person name="Tanaka T."/>
            <person name="Page D.C."/>
        </authorList>
    </citation>
    <scope>NUCLEOTIDE SEQUENCE [GENOMIC DNA] OF 146-192</scope>
</reference>
<reference key="8">
    <citation type="journal article" date="2003" name="Nature">
        <title>Proteomic characterization of the human centrosome by protein correlation profiling.</title>
        <authorList>
            <person name="Andersen J.S."/>
            <person name="Wilkinson C.J."/>
            <person name="Mayor T."/>
            <person name="Mortensen P."/>
            <person name="Nigg E.A."/>
            <person name="Mann M."/>
        </authorList>
    </citation>
    <scope>IDENTIFICATION BY MASS SPECTROMETRY</scope>
    <source>
        <tissue>Lymphoblast</tissue>
    </source>
</reference>
<reference key="9">
    <citation type="journal article" date="2009" name="Science">
        <title>Lysine acetylation targets protein complexes and co-regulates major cellular functions.</title>
        <authorList>
            <person name="Choudhary C."/>
            <person name="Kumar C."/>
            <person name="Gnad F."/>
            <person name="Nielsen M.L."/>
            <person name="Rehman M."/>
            <person name="Walther T.C."/>
            <person name="Olsen J.V."/>
            <person name="Mann M."/>
        </authorList>
    </citation>
    <scope>ACETYLATION [LARGE SCALE ANALYSIS] AT LYS-121</scope>
    <scope>IDENTIFICATION BY MASS SPECTROMETRY [LARGE SCALE ANALYSIS]</scope>
</reference>
<reference key="10">
    <citation type="journal article" date="2011" name="BMC Syst. Biol.">
        <title>Initial characterization of the human central proteome.</title>
        <authorList>
            <person name="Burkard T.R."/>
            <person name="Planyavsky M."/>
            <person name="Kaupe I."/>
            <person name="Breitwieser F.P."/>
            <person name="Buerckstuemmer T."/>
            <person name="Bennett K.L."/>
            <person name="Superti-Furga G."/>
            <person name="Colinge J."/>
        </authorList>
    </citation>
    <scope>IDENTIFICATION BY MASS SPECTROMETRY [LARGE SCALE ANALYSIS]</scope>
</reference>
<reference key="11">
    <citation type="journal article" date="2012" name="Proc. Natl. Acad. Sci. U.S.A.">
        <title>N-terminal acetylome analyses and functional insights of the N-terminal acetyltransferase NatB.</title>
        <authorList>
            <person name="Van Damme P."/>
            <person name="Lasa M."/>
            <person name="Polevoda B."/>
            <person name="Gazquez C."/>
            <person name="Elosegui-Artola A."/>
            <person name="Kim D.S."/>
            <person name="De Juan-Pardo E."/>
            <person name="Demeyer K."/>
            <person name="Hole K."/>
            <person name="Larrea E."/>
            <person name="Timmerman E."/>
            <person name="Prieto J."/>
            <person name="Arnesen T."/>
            <person name="Sherman F."/>
            <person name="Gevaert K."/>
            <person name="Aldabe R."/>
        </authorList>
    </citation>
    <scope>IDENTIFICATION BY MASS SPECTROMETRY [LARGE SCALE ANALYSIS]</scope>
</reference>
<reference key="12">
    <citation type="journal article" date="2014" name="Curr. Opin. Struct. Biol.">
        <title>A new system for naming ribosomal proteins.</title>
        <authorList>
            <person name="Ban N."/>
            <person name="Beckmann R."/>
            <person name="Cate J.H.D."/>
            <person name="Dinman J.D."/>
            <person name="Dragon F."/>
            <person name="Ellis S.R."/>
            <person name="Lafontaine D.L.J."/>
            <person name="Lindahl L."/>
            <person name="Liljas A."/>
            <person name="Lipton J.M."/>
            <person name="McAlear M.A."/>
            <person name="Moore P.B."/>
            <person name="Noller H.F."/>
            <person name="Ortega J."/>
            <person name="Panse V.G."/>
            <person name="Ramakrishnan V."/>
            <person name="Spahn C.M.T."/>
            <person name="Steitz T.A."/>
            <person name="Tchorzewski M."/>
            <person name="Tollervey D."/>
            <person name="Warren A.J."/>
            <person name="Williamson J.R."/>
            <person name="Wilson D."/>
            <person name="Yonath A."/>
            <person name="Yusupov M."/>
        </authorList>
    </citation>
    <scope>NOMENCLATURE</scope>
</reference>
<reference key="13">
    <citation type="journal article" date="2014" name="J. Proteomics">
        <title>An enzyme assisted RP-RPLC approach for in-depth analysis of human liver phosphoproteome.</title>
        <authorList>
            <person name="Bian Y."/>
            <person name="Song C."/>
            <person name="Cheng K."/>
            <person name="Dong M."/>
            <person name="Wang F."/>
            <person name="Huang J."/>
            <person name="Sun D."/>
            <person name="Wang L."/>
            <person name="Ye M."/>
            <person name="Zou H."/>
        </authorList>
    </citation>
    <scope>IDENTIFICATION BY MASS SPECTROMETRY [LARGE SCALE ANALYSIS]</scope>
    <source>
        <tissue>Liver</tissue>
    </source>
</reference>
<reference key="14">
    <citation type="journal article" date="2015" name="Proteomics">
        <title>N-terminome analysis of the human mitochondrial proteome.</title>
        <authorList>
            <person name="Vaca Jacome A.S."/>
            <person name="Rabilloud T."/>
            <person name="Schaeffer-Reiss C."/>
            <person name="Rompais M."/>
            <person name="Ayoub D."/>
            <person name="Lane L."/>
            <person name="Bairoch A."/>
            <person name="Van Dorsselaer A."/>
            <person name="Carapito C."/>
        </authorList>
    </citation>
    <scope>IDENTIFICATION BY MASS SPECTROMETRY [LARGE SCALE ANALYSIS]</scope>
</reference>
<reference key="15">
    <citation type="submission" date="2005-11" db="PDB data bank">
        <title>Solution structure of the N-terminal domain of human ribosomal protein L9.</title>
        <authorList>
            <consortium name="RIKEN structural genomics initiative (RSGI)"/>
        </authorList>
    </citation>
    <scope>STRUCTURE BY NMR OF 1-87</scope>
</reference>
<reference key="16">
    <citation type="journal article" date="2013" name="Nature">
        <title>Structures of the human and Drosophila 80S ribosome.</title>
        <authorList>
            <person name="Anger A.M."/>
            <person name="Armache J.P."/>
            <person name="Berninghausen O."/>
            <person name="Habeck M."/>
            <person name="Subklewe M."/>
            <person name="Wilson D.N."/>
            <person name="Beckmann R."/>
        </authorList>
    </citation>
    <scope>STRUCTURE BY ELECTRON MICROSCOPY (5.0 ANGSTROMS)</scope>
    <scope>FUNCTION</scope>
    <scope>SUBUNIT</scope>
    <scope>SUBCELLULAR LOCATION</scope>
</reference>
<reference evidence="5 6 7 8" key="17">
    <citation type="journal article" date="2020" name="Nat. Commun.">
        <title>Structural snapshots of human pre-60S ribosomal particles before and after nuclear export.</title>
        <authorList>
            <person name="Liang X."/>
            <person name="Zuo M.Q."/>
            <person name="Zhang Y."/>
            <person name="Li N."/>
            <person name="Ma C."/>
            <person name="Dong M.Q."/>
            <person name="Gao N."/>
        </authorList>
    </citation>
    <scope>STRUCTURE BY ELECTRON MICROSCOPY (3.09 ANGSTROMS)</scope>
    <scope>FUNCTION</scope>
    <scope>SUBUNIT</scope>
</reference>
<gene>
    <name type="primary">RPL9</name>
    <name type="ORF">OK/SW-cl.103</name>
</gene>
<gene>
    <name type="primary">RPL9P7</name>
</gene>
<gene>
    <name type="primary">RPL9P8</name>
</gene>
<gene>
    <name type="primary">RPL9P9</name>
</gene>
<comment type="function">
    <text evidence="1 2">Component of the large ribosomal subunit (PubMed:23636399, PubMed:32669547). The ribosome is a large ribonucleoprotein complex responsible for the synthesis of proteins in the cell (PubMed:23636399, PubMed:32669547).</text>
</comment>
<comment type="subunit">
    <text evidence="1 2">Component of the large ribosomal subunit.</text>
</comment>
<comment type="interaction">
    <interactant intactId="EBI-358122">
        <id>P32969</id>
    </interactant>
    <interactant intactId="EBI-1642333">
        <id>Q9BYV9</id>
        <label>BACH2</label>
    </interactant>
    <organismsDiffer>false</organismsDiffer>
    <experiments>3</experiments>
</comment>
<comment type="interaction">
    <interactant intactId="EBI-358122">
        <id>P32969</id>
    </interactant>
    <interactant intactId="EBI-10171799">
        <id>A1A5D9</id>
        <label>BICDL2</label>
    </interactant>
    <organismsDiffer>false</organismsDiffer>
    <experiments>3</experiments>
</comment>
<comment type="interaction">
    <interactant intactId="EBI-358122">
        <id>P32969</id>
    </interactant>
    <interactant intactId="EBI-739580">
        <id>Q13137</id>
        <label>CALCOCO2</label>
    </interactant>
    <organismsDiffer>false</organismsDiffer>
    <experiments>3</experiments>
</comment>
<comment type="interaction">
    <interactant intactId="EBI-358122">
        <id>P32969</id>
    </interactant>
    <interactant intactId="EBI-741724">
        <id>Q8NA61</id>
        <label>CBY2</label>
    </interactant>
    <organismsDiffer>false</organismsDiffer>
    <experiments>3</experiments>
</comment>
<comment type="interaction">
    <interactant intactId="EBI-358122">
        <id>P32969</id>
    </interactant>
    <interactant intactId="EBI-10179526">
        <id>Q52MB2</id>
        <label>CCDC184</label>
    </interactant>
    <organismsDiffer>false</organismsDiffer>
    <experiments>6</experiments>
</comment>
<comment type="interaction">
    <interactant intactId="EBI-358122">
        <id>P32969</id>
    </interactant>
    <interactant intactId="EBI-742887">
        <id>Q8TAP6</id>
        <label>CEP76</label>
    </interactant>
    <organismsDiffer>false</organismsDiffer>
    <experiments>8</experiments>
</comment>
<comment type="interaction">
    <interactant intactId="EBI-358122">
        <id>P32969</id>
    </interactant>
    <interactant intactId="EBI-11962928">
        <id>Q9UI47-2</id>
        <label>CTNNA3</label>
    </interactant>
    <organismsDiffer>false</organismsDiffer>
    <experiments>3</experiments>
</comment>
<comment type="interaction">
    <interactant intactId="EBI-358122">
        <id>P32969</id>
    </interactant>
    <interactant intactId="EBI-12748199">
        <id>Q14247-3</id>
        <label>CTTN</label>
    </interactant>
    <organismsDiffer>false</organismsDiffer>
    <experiments>3</experiments>
</comment>
<comment type="interaction">
    <interactant intactId="EBI-358122">
        <id>P32969</id>
    </interactant>
    <interactant intactId="EBI-741925">
        <id>P49366</id>
        <label>DHPS</label>
    </interactant>
    <organismsDiffer>false</organismsDiffer>
    <experiments>12</experiments>
</comment>
<comment type="interaction">
    <interactant intactId="EBI-358122">
        <id>P32969</id>
    </interactant>
    <interactant intactId="EBI-712941">
        <id>Q14919</id>
        <label>DRAP1</label>
    </interactant>
    <organismsDiffer>false</organismsDiffer>
    <experiments>3</experiments>
</comment>
<comment type="interaction">
    <interactant intactId="EBI-358122">
        <id>P32969</id>
    </interactant>
    <interactant intactId="EBI-10175124">
        <id>Q8IZU0</id>
        <label>FAM9B</label>
    </interactant>
    <organismsDiffer>false</organismsDiffer>
    <experiments>3</experiments>
</comment>
<comment type="interaction">
    <interactant intactId="EBI-358122">
        <id>P32969</id>
    </interactant>
    <interactant intactId="EBI-2549423">
        <id>Q6NT76</id>
        <label>HMBOX1</label>
    </interactant>
    <organismsDiffer>false</organismsDiffer>
    <experiments>6</experiments>
</comment>
<comment type="interaction">
    <interactant intactId="EBI-358122">
        <id>P32969</id>
    </interactant>
    <interactant intactId="EBI-10172004">
        <id>Q8IX15-3</id>
        <label>HOMEZ</label>
    </interactant>
    <organismsDiffer>false</organismsDiffer>
    <experiments>3</experiments>
</comment>
<comment type="interaction">
    <interactant intactId="EBI-358122">
        <id>P32969</id>
    </interactant>
    <interactant intactId="EBI-739657">
        <id>Q9BQD3</id>
        <label>KXD1</label>
    </interactant>
    <organismsDiffer>false</organismsDiffer>
    <experiments>3</experiments>
</comment>
<comment type="interaction">
    <interactant intactId="EBI-358122">
        <id>P32969</id>
    </interactant>
    <interactant intactId="EBI-742948">
        <id>Q5JR59</id>
        <label>MTUS2</label>
    </interactant>
    <organismsDiffer>false</organismsDiffer>
    <experiments>3</experiments>
</comment>
<comment type="interaction">
    <interactant intactId="EBI-358122">
        <id>P32969</id>
    </interactant>
    <interactant intactId="EBI-302355">
        <id>Q9UL42</id>
        <label>PNMA2</label>
    </interactant>
    <organismsDiffer>false</organismsDiffer>
    <experiments>6</experiments>
</comment>
<comment type="interaction">
    <interactant intactId="EBI-358122">
        <id>P32969</id>
    </interactant>
    <interactant intactId="EBI-5235602">
        <id>Q86WC6</id>
        <label>PPP1R27</label>
    </interactant>
    <organismsDiffer>false</organismsDiffer>
    <experiments>3</experiments>
</comment>
<comment type="interaction">
    <interactant intactId="EBI-358122">
        <id>P32969</id>
    </interactant>
    <interactant intactId="EBI-1050964">
        <id>O43586</id>
        <label>PSTPIP1</label>
    </interactant>
    <organismsDiffer>false</organismsDiffer>
    <experiments>3</experiments>
</comment>
<comment type="interaction">
    <interactant intactId="EBI-358122">
        <id>P32969</id>
    </interactant>
    <interactant intactId="EBI-9512693">
        <id>Q53GL6</id>
        <label>RALY</label>
    </interactant>
    <organismsDiffer>false</organismsDiffer>
    <experiments>3</experiments>
</comment>
<comment type="interaction">
    <interactant intactId="EBI-358122">
        <id>P32969</id>
    </interactant>
    <interactant intactId="EBI-356900">
        <id>P62306</id>
        <label>SNRPF</label>
    </interactant>
    <organismsDiffer>false</organismsDiffer>
    <experiments>3</experiments>
</comment>
<comment type="interaction">
    <interactant intactId="EBI-358122">
        <id>P32969</id>
    </interactant>
    <interactant intactId="EBI-10268630">
        <id>Q8N9Q2</id>
        <label>SREK1IP1</label>
    </interactant>
    <organismsDiffer>false</organismsDiffer>
    <experiments>3</experiments>
</comment>
<comment type="interaction">
    <interactant intactId="EBI-358122">
        <id>P32969</id>
    </interactant>
    <interactant intactId="EBI-372557">
        <id>P84103</id>
        <label>SRSF3</label>
    </interactant>
    <organismsDiffer>false</organismsDiffer>
    <experiments>3</experiments>
</comment>
<comment type="interaction">
    <interactant intactId="EBI-358122">
        <id>P32969</id>
    </interactant>
    <interactant intactId="EBI-745680">
        <id>Q96MF2</id>
        <label>STAC3</label>
    </interactant>
    <organismsDiffer>false</organismsDiffer>
    <experiments>3</experiments>
</comment>
<comment type="interaction">
    <interactant intactId="EBI-358122">
        <id>P32969</id>
    </interactant>
    <interactant intactId="EBI-740711">
        <id>Q96CG3</id>
        <label>TIFA</label>
    </interactant>
    <organismsDiffer>false</organismsDiffer>
    <experiments>6</experiments>
</comment>
<comment type="interaction">
    <interactant intactId="EBI-358122">
        <id>P32969</id>
    </interactant>
    <interactant intactId="EBI-752102">
        <id>Q8WVP5</id>
        <label>TNFAIP8L1</label>
    </interactant>
    <organismsDiffer>false</organismsDiffer>
    <experiments>3</experiments>
</comment>
<comment type="interaction">
    <interactant intactId="EBI-358122">
        <id>P32969</id>
    </interactant>
    <interactant intactId="EBI-741602">
        <id>O94972</id>
        <label>TRIM37</label>
    </interactant>
    <organismsDiffer>false</organismsDiffer>
    <experiments>3</experiments>
</comment>
<comment type="interaction">
    <interactant intactId="EBI-358122">
        <id>P32969</id>
    </interactant>
    <interactant intactId="EBI-355164">
        <id>P55072</id>
        <label>VCP</label>
    </interactant>
    <organismsDiffer>false</organismsDiffer>
    <experiments>6</experiments>
</comment>
<comment type="interaction">
    <interactant intactId="EBI-358122">
        <id>P32969</id>
    </interactant>
    <interactant intactId="EBI-10176632">
        <id>O43829</id>
        <label>ZBTB14</label>
    </interactant>
    <organismsDiffer>false</organismsDiffer>
    <experiments>3</experiments>
</comment>
<comment type="interaction">
    <interactant intactId="EBI-358122">
        <id>P32969</id>
    </interactant>
    <interactant intactId="EBI-740434">
        <id>O15156</id>
        <label>ZBTB7B</label>
    </interactant>
    <organismsDiffer>false</organismsDiffer>
    <experiments>3</experiments>
</comment>
<comment type="interaction">
    <interactant intactId="EBI-358122">
        <id>P32969</id>
    </interactant>
    <interactant intactId="EBI-742740">
        <id>Q96BR9</id>
        <label>ZBTB8A</label>
    </interactant>
    <organismsDiffer>false</organismsDiffer>
    <experiments>6</experiments>
</comment>
<comment type="subcellular location">
    <subcellularLocation>
        <location evidence="1">Cytoplasm</location>
    </subcellularLocation>
</comment>
<comment type="similarity">
    <text evidence="4">Belongs to the universal ribosomal protein uL6 family.</text>
</comment>
<dbReference type="EMBL" id="D14531">
    <property type="protein sequence ID" value="BAA03401.1"/>
    <property type="molecule type" value="mRNA"/>
</dbReference>
<dbReference type="EMBL" id="U09953">
    <property type="protein sequence ID" value="AAB01040.1"/>
    <property type="molecule type" value="mRNA"/>
</dbReference>
<dbReference type="EMBL" id="U09954">
    <property type="protein sequence ID" value="AAB01041.1"/>
    <property type="molecule type" value="Genomic_DNA"/>
</dbReference>
<dbReference type="EMBL" id="U21138">
    <property type="protein sequence ID" value="AAA63752.1"/>
    <property type="molecule type" value="mRNA"/>
</dbReference>
<dbReference type="EMBL" id="AB062431">
    <property type="protein sequence ID" value="BAB93494.1"/>
    <property type="molecule type" value="mRNA"/>
</dbReference>
<dbReference type="EMBL" id="BC000483">
    <property type="protein sequence ID" value="AAH00483.1"/>
    <property type="molecule type" value="mRNA"/>
</dbReference>
<dbReference type="EMBL" id="BC004156">
    <property type="protein sequence ID" value="AAH04156.1"/>
    <property type="molecule type" value="mRNA"/>
</dbReference>
<dbReference type="EMBL" id="BC004206">
    <property type="protein sequence ID" value="AAH04206.1"/>
    <property type="molecule type" value="mRNA"/>
</dbReference>
<dbReference type="EMBL" id="BC007967">
    <property type="protein sequence ID" value="AAH07967.1"/>
    <property type="molecule type" value="mRNA"/>
</dbReference>
<dbReference type="EMBL" id="BC012149">
    <property type="protein sequence ID" value="AAH12149.1"/>
    <property type="molecule type" value="mRNA"/>
</dbReference>
<dbReference type="EMBL" id="BC031906">
    <property type="protein sequence ID" value="AAH31906.1"/>
    <property type="molecule type" value="mRNA"/>
</dbReference>
<dbReference type="EMBL" id="BC066318">
    <property type="protein sequence ID" value="AAH66318.1"/>
    <property type="molecule type" value="mRNA"/>
</dbReference>
<dbReference type="EMBL" id="BC070214">
    <property type="protein sequence ID" value="AAH70214.1"/>
    <property type="molecule type" value="mRNA"/>
</dbReference>
<dbReference type="EMBL" id="AB007169">
    <property type="protein sequence ID" value="BAA25830.1"/>
    <property type="molecule type" value="Genomic_DNA"/>
</dbReference>
<dbReference type="CCDS" id="CCDS3452.1"/>
<dbReference type="PIR" id="S65792">
    <property type="entry name" value="S65792"/>
</dbReference>
<dbReference type="RefSeq" id="NP_000652.2">
    <property type="nucleotide sequence ID" value="NM_000661.4"/>
</dbReference>
<dbReference type="RefSeq" id="NP_001020092.1">
    <property type="nucleotide sequence ID" value="NM_001024921.4"/>
</dbReference>
<dbReference type="PDB" id="2CQL">
    <property type="method" value="NMR"/>
    <property type="chains" value="A=1-87"/>
</dbReference>
<dbReference type="PDB" id="4UG0">
    <property type="method" value="EM"/>
    <property type="chains" value="LH=1-192"/>
</dbReference>
<dbReference type="PDB" id="4V6X">
    <property type="method" value="EM"/>
    <property type="resolution" value="5.00 A"/>
    <property type="chains" value="CH=1-192"/>
</dbReference>
<dbReference type="PDB" id="5AJ0">
    <property type="method" value="EM"/>
    <property type="resolution" value="3.50 A"/>
    <property type="chains" value="AH=1-192"/>
</dbReference>
<dbReference type="PDB" id="5LKS">
    <property type="method" value="EM"/>
    <property type="resolution" value="3.60 A"/>
    <property type="chains" value="LH=1-192"/>
</dbReference>
<dbReference type="PDB" id="5T2C">
    <property type="method" value="EM"/>
    <property type="resolution" value="3.60 A"/>
    <property type="chains" value="o=1-192"/>
</dbReference>
<dbReference type="PDB" id="6IP5">
    <property type="method" value="EM"/>
    <property type="resolution" value="3.90 A"/>
    <property type="chains" value="2C=1-192"/>
</dbReference>
<dbReference type="PDB" id="6IP6">
    <property type="method" value="EM"/>
    <property type="resolution" value="4.50 A"/>
    <property type="chains" value="2C=1-192"/>
</dbReference>
<dbReference type="PDB" id="6IP8">
    <property type="method" value="EM"/>
    <property type="resolution" value="3.90 A"/>
    <property type="chains" value="2C=1-192"/>
</dbReference>
<dbReference type="PDB" id="6LQM">
    <property type="method" value="EM"/>
    <property type="resolution" value="3.09 A"/>
    <property type="chains" value="I=1-192"/>
</dbReference>
<dbReference type="PDB" id="6LSR">
    <property type="method" value="EM"/>
    <property type="resolution" value="3.13 A"/>
    <property type="chains" value="I=1-192"/>
</dbReference>
<dbReference type="PDB" id="6LSS">
    <property type="method" value="EM"/>
    <property type="resolution" value="3.23 A"/>
    <property type="chains" value="I=1-192"/>
</dbReference>
<dbReference type="PDB" id="6LU8">
    <property type="method" value="EM"/>
    <property type="resolution" value="3.13 A"/>
    <property type="chains" value="I=1-192"/>
</dbReference>
<dbReference type="PDB" id="6OLE">
    <property type="method" value="EM"/>
    <property type="resolution" value="3.10 A"/>
    <property type="chains" value="J=1-191"/>
</dbReference>
<dbReference type="PDB" id="6OLF">
    <property type="method" value="EM"/>
    <property type="resolution" value="3.90 A"/>
    <property type="chains" value="J=1-191"/>
</dbReference>
<dbReference type="PDB" id="6OLG">
    <property type="method" value="EM"/>
    <property type="resolution" value="3.40 A"/>
    <property type="chains" value="AH=1-191"/>
</dbReference>
<dbReference type="PDB" id="6OLI">
    <property type="method" value="EM"/>
    <property type="resolution" value="3.50 A"/>
    <property type="chains" value="J=1-191"/>
</dbReference>
<dbReference type="PDB" id="6OLZ">
    <property type="method" value="EM"/>
    <property type="resolution" value="3.90 A"/>
    <property type="chains" value="AH=1-191"/>
</dbReference>
<dbReference type="PDB" id="6OM0">
    <property type="method" value="EM"/>
    <property type="resolution" value="3.10 A"/>
    <property type="chains" value="J=1-191"/>
</dbReference>
<dbReference type="PDB" id="6OM7">
    <property type="method" value="EM"/>
    <property type="resolution" value="3.70 A"/>
    <property type="chains" value="J=1-191"/>
</dbReference>
<dbReference type="PDB" id="6QZP">
    <property type="method" value="EM"/>
    <property type="resolution" value="2.90 A"/>
    <property type="chains" value="LH=1-190"/>
</dbReference>
<dbReference type="PDB" id="6W6L">
    <property type="method" value="EM"/>
    <property type="resolution" value="3.84 A"/>
    <property type="chains" value="J=1-192"/>
</dbReference>
<dbReference type="PDB" id="6XA1">
    <property type="method" value="EM"/>
    <property type="resolution" value="2.80 A"/>
    <property type="chains" value="LH=1-190"/>
</dbReference>
<dbReference type="PDB" id="6Y0G">
    <property type="method" value="EM"/>
    <property type="resolution" value="3.20 A"/>
    <property type="chains" value="LH=1-192"/>
</dbReference>
<dbReference type="PDB" id="6Y2L">
    <property type="method" value="EM"/>
    <property type="resolution" value="3.00 A"/>
    <property type="chains" value="LH=1-192"/>
</dbReference>
<dbReference type="PDB" id="6Y57">
    <property type="method" value="EM"/>
    <property type="resolution" value="3.50 A"/>
    <property type="chains" value="LH=1-192"/>
</dbReference>
<dbReference type="PDB" id="6Y6X">
    <property type="method" value="EM"/>
    <property type="resolution" value="2.80 A"/>
    <property type="chains" value="LH=1-190"/>
</dbReference>
<dbReference type="PDB" id="6Z6L">
    <property type="method" value="EM"/>
    <property type="resolution" value="3.00 A"/>
    <property type="chains" value="LH=1-192"/>
</dbReference>
<dbReference type="PDB" id="6Z6M">
    <property type="method" value="EM"/>
    <property type="resolution" value="3.10 A"/>
    <property type="chains" value="LH=1-192"/>
</dbReference>
<dbReference type="PDB" id="6Z6N">
    <property type="method" value="EM"/>
    <property type="resolution" value="2.90 A"/>
    <property type="chains" value="LH=1-192"/>
</dbReference>
<dbReference type="PDB" id="6ZM7">
    <property type="method" value="EM"/>
    <property type="resolution" value="2.70 A"/>
    <property type="chains" value="LH=1-192"/>
</dbReference>
<dbReference type="PDB" id="6ZME">
    <property type="method" value="EM"/>
    <property type="resolution" value="3.00 A"/>
    <property type="chains" value="LH=1-192"/>
</dbReference>
<dbReference type="PDB" id="6ZMI">
    <property type="method" value="EM"/>
    <property type="resolution" value="2.60 A"/>
    <property type="chains" value="LH=1-192"/>
</dbReference>
<dbReference type="PDB" id="6ZMO">
    <property type="method" value="EM"/>
    <property type="resolution" value="3.10 A"/>
    <property type="chains" value="LH=1-192"/>
</dbReference>
<dbReference type="PDB" id="7BHP">
    <property type="method" value="EM"/>
    <property type="resolution" value="3.30 A"/>
    <property type="chains" value="LH=1-192"/>
</dbReference>
<dbReference type="PDB" id="7F5S">
    <property type="method" value="EM"/>
    <property type="resolution" value="2.72 A"/>
    <property type="chains" value="LH=1-192"/>
</dbReference>
<dbReference type="PDB" id="7OW7">
    <property type="method" value="EM"/>
    <property type="resolution" value="2.20 A"/>
    <property type="chains" value="o=1-190"/>
</dbReference>
<dbReference type="PDB" id="7QVP">
    <property type="method" value="EM"/>
    <property type="resolution" value="3.00 A"/>
    <property type="chains" value="LH/MH=1-192"/>
</dbReference>
<dbReference type="PDB" id="7XNX">
    <property type="method" value="EM"/>
    <property type="resolution" value="2.70 A"/>
    <property type="chains" value="LH=1-192"/>
</dbReference>
<dbReference type="PDB" id="7XNY">
    <property type="method" value="EM"/>
    <property type="resolution" value="2.50 A"/>
    <property type="chains" value="LH=1-192"/>
</dbReference>
<dbReference type="PDB" id="8A3D">
    <property type="method" value="EM"/>
    <property type="resolution" value="1.67 A"/>
    <property type="chains" value="o=1-192"/>
</dbReference>
<dbReference type="PDB" id="8FKR">
    <property type="method" value="EM"/>
    <property type="resolution" value="2.89 A"/>
    <property type="chains" value="SG=1-192"/>
</dbReference>
<dbReference type="PDB" id="8FKS">
    <property type="method" value="EM"/>
    <property type="resolution" value="2.88 A"/>
    <property type="chains" value="SG=1-192"/>
</dbReference>
<dbReference type="PDB" id="8FKT">
    <property type="method" value="EM"/>
    <property type="resolution" value="2.81 A"/>
    <property type="chains" value="SG=1-192"/>
</dbReference>
<dbReference type="PDB" id="8FKU">
    <property type="method" value="EM"/>
    <property type="resolution" value="2.82 A"/>
    <property type="chains" value="SG=1-192"/>
</dbReference>
<dbReference type="PDB" id="8FKV">
    <property type="method" value="EM"/>
    <property type="resolution" value="2.47 A"/>
    <property type="chains" value="SG=1-192"/>
</dbReference>
<dbReference type="PDB" id="8FKW">
    <property type="method" value="EM"/>
    <property type="resolution" value="2.50 A"/>
    <property type="chains" value="SG=1-192"/>
</dbReference>
<dbReference type="PDB" id="8FKX">
    <property type="method" value="EM"/>
    <property type="resolution" value="2.59 A"/>
    <property type="chains" value="SG=1-192"/>
</dbReference>
<dbReference type="PDB" id="8FKY">
    <property type="method" value="EM"/>
    <property type="resolution" value="2.67 A"/>
    <property type="chains" value="SG=1-192"/>
</dbReference>
<dbReference type="PDB" id="8FKZ">
    <property type="method" value="EM"/>
    <property type="resolution" value="3.04 A"/>
    <property type="chains" value="SG=1-192"/>
</dbReference>
<dbReference type="PDB" id="8FL0">
    <property type="method" value="EM"/>
    <property type="resolution" value="2.91 A"/>
    <property type="chains" value="SG=1-192"/>
</dbReference>
<dbReference type="PDB" id="8FL2">
    <property type="method" value="EM"/>
    <property type="resolution" value="2.67 A"/>
    <property type="chains" value="SG=1-192"/>
</dbReference>
<dbReference type="PDB" id="8FL3">
    <property type="method" value="EM"/>
    <property type="resolution" value="2.53 A"/>
    <property type="chains" value="SG=1-192"/>
</dbReference>
<dbReference type="PDB" id="8FL4">
    <property type="method" value="EM"/>
    <property type="resolution" value="2.89 A"/>
    <property type="chains" value="SG=1-192"/>
</dbReference>
<dbReference type="PDB" id="8FL6">
    <property type="method" value="EM"/>
    <property type="resolution" value="2.62 A"/>
    <property type="chains" value="SG=1-192"/>
</dbReference>
<dbReference type="PDB" id="8FL7">
    <property type="method" value="EM"/>
    <property type="resolution" value="2.55 A"/>
    <property type="chains" value="SG=1-192"/>
</dbReference>
<dbReference type="PDB" id="8FL9">
    <property type="method" value="EM"/>
    <property type="resolution" value="2.75 A"/>
    <property type="chains" value="SG=1-192"/>
</dbReference>
<dbReference type="PDB" id="8FLA">
    <property type="method" value="EM"/>
    <property type="resolution" value="2.63 A"/>
    <property type="chains" value="SG=1-192"/>
</dbReference>
<dbReference type="PDB" id="8FLB">
    <property type="method" value="EM"/>
    <property type="resolution" value="2.55 A"/>
    <property type="chains" value="SG=1-192"/>
</dbReference>
<dbReference type="PDB" id="8FLC">
    <property type="method" value="EM"/>
    <property type="resolution" value="2.76 A"/>
    <property type="chains" value="SG=1-192"/>
</dbReference>
<dbReference type="PDB" id="8FLD">
    <property type="method" value="EM"/>
    <property type="resolution" value="2.58 A"/>
    <property type="chains" value="SG=1-192"/>
</dbReference>
<dbReference type="PDB" id="8FLE">
    <property type="method" value="EM"/>
    <property type="resolution" value="2.48 A"/>
    <property type="chains" value="SG=1-192"/>
</dbReference>
<dbReference type="PDB" id="8FLF">
    <property type="method" value="EM"/>
    <property type="resolution" value="2.65 A"/>
    <property type="chains" value="SG=1-192"/>
</dbReference>
<dbReference type="PDB" id="8G5Y">
    <property type="method" value="EM"/>
    <property type="resolution" value="2.29 A"/>
    <property type="chains" value="LH=1-192"/>
</dbReference>
<dbReference type="PDB" id="8G5Z">
    <property type="method" value="EM"/>
    <property type="resolution" value="2.64 A"/>
    <property type="chains" value="LH=1-190"/>
</dbReference>
<dbReference type="PDB" id="8G60">
    <property type="method" value="EM"/>
    <property type="resolution" value="2.54 A"/>
    <property type="chains" value="LH=1-192"/>
</dbReference>
<dbReference type="PDB" id="8G61">
    <property type="method" value="EM"/>
    <property type="resolution" value="2.94 A"/>
    <property type="chains" value="LH=1-192"/>
</dbReference>
<dbReference type="PDB" id="8G6J">
    <property type="method" value="EM"/>
    <property type="resolution" value="2.80 A"/>
    <property type="chains" value="LH=1-192"/>
</dbReference>
<dbReference type="PDB" id="8GLP">
    <property type="method" value="EM"/>
    <property type="resolution" value="1.67 A"/>
    <property type="chains" value="LH=1-192"/>
</dbReference>
<dbReference type="PDB" id="8IDT">
    <property type="method" value="EM"/>
    <property type="resolution" value="2.80 A"/>
    <property type="chains" value="I=1-192"/>
</dbReference>
<dbReference type="PDB" id="8IDY">
    <property type="method" value="EM"/>
    <property type="resolution" value="3.00 A"/>
    <property type="chains" value="I=1-192"/>
</dbReference>
<dbReference type="PDB" id="8IE3">
    <property type="method" value="EM"/>
    <property type="resolution" value="3.30 A"/>
    <property type="chains" value="I=1-192"/>
</dbReference>
<dbReference type="PDB" id="8IFD">
    <property type="method" value="EM"/>
    <property type="resolution" value="2.59 A"/>
    <property type="chains" value="2C=1-192"/>
</dbReference>
<dbReference type="PDB" id="8IFE">
    <property type="method" value="EM"/>
    <property type="resolution" value="2.57 A"/>
    <property type="chains" value="2C=1-192"/>
</dbReference>
<dbReference type="PDB" id="8INE">
    <property type="method" value="EM"/>
    <property type="resolution" value="3.20 A"/>
    <property type="chains" value="I=1-192"/>
</dbReference>
<dbReference type="PDB" id="8INF">
    <property type="method" value="EM"/>
    <property type="resolution" value="3.00 A"/>
    <property type="chains" value="I=1-192"/>
</dbReference>
<dbReference type="PDB" id="8INK">
    <property type="method" value="EM"/>
    <property type="resolution" value="3.20 A"/>
    <property type="chains" value="I=1-192"/>
</dbReference>
<dbReference type="PDB" id="8IPD">
    <property type="method" value="EM"/>
    <property type="resolution" value="3.20 A"/>
    <property type="chains" value="I=1-192"/>
</dbReference>
<dbReference type="PDB" id="8IPX">
    <property type="method" value="EM"/>
    <property type="resolution" value="4.30 A"/>
    <property type="chains" value="I=1-192"/>
</dbReference>
<dbReference type="PDB" id="8IPY">
    <property type="method" value="EM"/>
    <property type="resolution" value="3.20 A"/>
    <property type="chains" value="I=1-192"/>
</dbReference>
<dbReference type="PDB" id="8IR1">
    <property type="method" value="EM"/>
    <property type="resolution" value="3.30 A"/>
    <property type="chains" value="I=1-192"/>
</dbReference>
<dbReference type="PDB" id="8IR3">
    <property type="method" value="EM"/>
    <property type="resolution" value="3.50 A"/>
    <property type="chains" value="I=1-192"/>
</dbReference>
<dbReference type="PDB" id="8JDJ">
    <property type="method" value="EM"/>
    <property type="resolution" value="2.50 A"/>
    <property type="chains" value="N=1-192"/>
</dbReference>
<dbReference type="PDB" id="8JDK">
    <property type="method" value="EM"/>
    <property type="resolution" value="2.26 A"/>
    <property type="chains" value="N=1-192"/>
</dbReference>
<dbReference type="PDB" id="8JDL">
    <property type="method" value="EM"/>
    <property type="resolution" value="2.42 A"/>
    <property type="chains" value="N=1-192"/>
</dbReference>
<dbReference type="PDB" id="8JDM">
    <property type="method" value="EM"/>
    <property type="resolution" value="2.67 A"/>
    <property type="chains" value="N=1-192"/>
</dbReference>
<dbReference type="PDB" id="8K2C">
    <property type="method" value="EM"/>
    <property type="resolution" value="2.40 A"/>
    <property type="chains" value="LH=1-192"/>
</dbReference>
<dbReference type="PDB" id="8OHD">
    <property type="method" value="EM"/>
    <property type="resolution" value="3.10 A"/>
    <property type="chains" value="LH=1-192"/>
</dbReference>
<dbReference type="PDB" id="8OJ0">
    <property type="method" value="EM"/>
    <property type="resolution" value="3.30 A"/>
    <property type="chains" value="LH=1-192"/>
</dbReference>
<dbReference type="PDB" id="8OJ5">
    <property type="method" value="EM"/>
    <property type="resolution" value="2.90 A"/>
    <property type="chains" value="LH=1-192"/>
</dbReference>
<dbReference type="PDB" id="8OJ8">
    <property type="method" value="EM"/>
    <property type="resolution" value="3.30 A"/>
    <property type="chains" value="LH=1-192"/>
</dbReference>
<dbReference type="PDB" id="8QFD">
    <property type="method" value="EM"/>
    <property type="resolution" value="2.20 A"/>
    <property type="chains" value="H=1-192"/>
</dbReference>
<dbReference type="PDB" id="8QOI">
    <property type="method" value="EM"/>
    <property type="resolution" value="1.90 A"/>
    <property type="chains" value="LH=1-192"/>
</dbReference>
<dbReference type="PDB" id="8QYX">
    <property type="method" value="EM"/>
    <property type="resolution" value="1.78 A"/>
    <property type="chains" value="C1=1-192"/>
</dbReference>
<dbReference type="PDB" id="8RL2">
    <property type="method" value="EM"/>
    <property type="resolution" value="2.84 A"/>
    <property type="chains" value="LH=1-192"/>
</dbReference>
<dbReference type="PDB" id="8UKB">
    <property type="method" value="EM"/>
    <property type="resolution" value="3.05 A"/>
    <property type="chains" value="LH=1-190"/>
</dbReference>
<dbReference type="PDB" id="8XSX">
    <property type="method" value="EM"/>
    <property type="resolution" value="2.40 A"/>
    <property type="chains" value="LH=1-192"/>
</dbReference>
<dbReference type="PDB" id="8XSY">
    <property type="method" value="EM"/>
    <property type="resolution" value="3.00 A"/>
    <property type="chains" value="LH=1-192"/>
</dbReference>
<dbReference type="PDB" id="8XSZ">
    <property type="method" value="EM"/>
    <property type="resolution" value="3.20 A"/>
    <property type="chains" value="LH=1-192"/>
</dbReference>
<dbReference type="PDB" id="8Y0W">
    <property type="method" value="EM"/>
    <property type="resolution" value="3.40 A"/>
    <property type="chains" value="LH=1-192"/>
</dbReference>
<dbReference type="PDB" id="8Y0X">
    <property type="method" value="EM"/>
    <property type="resolution" value="3.30 A"/>
    <property type="chains" value="LH=1-192"/>
</dbReference>
<dbReference type="PDB" id="8YOO">
    <property type="method" value="EM"/>
    <property type="resolution" value="2.00 A"/>
    <property type="chains" value="LH=1-192"/>
</dbReference>
<dbReference type="PDB" id="8YOP">
    <property type="method" value="EM"/>
    <property type="resolution" value="2.20 A"/>
    <property type="chains" value="LH=1-192"/>
</dbReference>
<dbReference type="PDB" id="9C3H">
    <property type="method" value="EM"/>
    <property type="resolution" value="2.00 A"/>
    <property type="chains" value="LH=1-192"/>
</dbReference>
<dbReference type="PDB" id="9G8M">
    <property type="method" value="EM"/>
    <property type="resolution" value="3.30 A"/>
    <property type="chains" value="LH=1-192"/>
</dbReference>
<dbReference type="PDB" id="9GMO">
    <property type="method" value="EM"/>
    <property type="resolution" value="2.59 A"/>
    <property type="chains" value="o=1-192"/>
</dbReference>
<dbReference type="PDBsum" id="2CQL"/>
<dbReference type="PDBsum" id="4UG0"/>
<dbReference type="PDBsum" id="4V6X"/>
<dbReference type="PDBsum" id="5AJ0"/>
<dbReference type="PDBsum" id="5LKS"/>
<dbReference type="PDBsum" id="5T2C"/>
<dbReference type="PDBsum" id="6IP5"/>
<dbReference type="PDBsum" id="6IP6"/>
<dbReference type="PDBsum" id="6IP8"/>
<dbReference type="PDBsum" id="6LQM"/>
<dbReference type="PDBsum" id="6LSR"/>
<dbReference type="PDBsum" id="6LSS"/>
<dbReference type="PDBsum" id="6LU8"/>
<dbReference type="PDBsum" id="6OLE"/>
<dbReference type="PDBsum" id="6OLF"/>
<dbReference type="PDBsum" id="6OLG"/>
<dbReference type="PDBsum" id="6OLI"/>
<dbReference type="PDBsum" id="6OLZ"/>
<dbReference type="PDBsum" id="6OM0"/>
<dbReference type="PDBsum" id="6OM7"/>
<dbReference type="PDBsum" id="6QZP"/>
<dbReference type="PDBsum" id="6W6L"/>
<dbReference type="PDBsum" id="6XA1"/>
<dbReference type="PDBsum" id="6Y0G"/>
<dbReference type="PDBsum" id="6Y2L"/>
<dbReference type="PDBsum" id="6Y57"/>
<dbReference type="PDBsum" id="6Y6X"/>
<dbReference type="PDBsum" id="6Z6L"/>
<dbReference type="PDBsum" id="6Z6M"/>
<dbReference type="PDBsum" id="6Z6N"/>
<dbReference type="PDBsum" id="6ZM7"/>
<dbReference type="PDBsum" id="6ZME"/>
<dbReference type="PDBsum" id="6ZMI"/>
<dbReference type="PDBsum" id="6ZMO"/>
<dbReference type="PDBsum" id="7BHP"/>
<dbReference type="PDBsum" id="7F5S"/>
<dbReference type="PDBsum" id="7OW7"/>
<dbReference type="PDBsum" id="7QVP"/>
<dbReference type="PDBsum" id="7XNX"/>
<dbReference type="PDBsum" id="7XNY"/>
<dbReference type="PDBsum" id="8A3D"/>
<dbReference type="PDBsum" id="8FKR"/>
<dbReference type="PDBsum" id="8FKS"/>
<dbReference type="PDBsum" id="8FKT"/>
<dbReference type="PDBsum" id="8FKU"/>
<dbReference type="PDBsum" id="8FKV"/>
<dbReference type="PDBsum" id="8FKW"/>
<dbReference type="PDBsum" id="8FKX"/>
<dbReference type="PDBsum" id="8FKY"/>
<dbReference type="PDBsum" id="8FKZ"/>
<dbReference type="PDBsum" id="8FL0"/>
<dbReference type="PDBsum" id="8FL2"/>
<dbReference type="PDBsum" id="8FL3"/>
<dbReference type="PDBsum" id="8FL4"/>
<dbReference type="PDBsum" id="8FL6"/>
<dbReference type="PDBsum" id="8FL7"/>
<dbReference type="PDBsum" id="8FL9"/>
<dbReference type="PDBsum" id="8FLA"/>
<dbReference type="PDBsum" id="8FLB"/>
<dbReference type="PDBsum" id="8FLC"/>
<dbReference type="PDBsum" id="8FLD"/>
<dbReference type="PDBsum" id="8FLE"/>
<dbReference type="PDBsum" id="8FLF"/>
<dbReference type="PDBsum" id="8G5Y"/>
<dbReference type="PDBsum" id="8G5Z"/>
<dbReference type="PDBsum" id="8G60"/>
<dbReference type="PDBsum" id="8G61"/>
<dbReference type="PDBsum" id="8G6J"/>
<dbReference type="PDBsum" id="8GLP"/>
<dbReference type="PDBsum" id="8IDT"/>
<dbReference type="PDBsum" id="8IDY"/>
<dbReference type="PDBsum" id="8IE3"/>
<dbReference type="PDBsum" id="8IFD"/>
<dbReference type="PDBsum" id="8IFE"/>
<dbReference type="PDBsum" id="8INE"/>
<dbReference type="PDBsum" id="8INF"/>
<dbReference type="PDBsum" id="8INK"/>
<dbReference type="PDBsum" id="8IPD"/>
<dbReference type="PDBsum" id="8IPX"/>
<dbReference type="PDBsum" id="8IPY"/>
<dbReference type="PDBsum" id="8IR1"/>
<dbReference type="PDBsum" id="8IR3"/>
<dbReference type="PDBsum" id="8JDJ"/>
<dbReference type="PDBsum" id="8JDK"/>
<dbReference type="PDBsum" id="8JDL"/>
<dbReference type="PDBsum" id="8JDM"/>
<dbReference type="PDBsum" id="8K2C"/>
<dbReference type="PDBsum" id="8OHD"/>
<dbReference type="PDBsum" id="8OJ0"/>
<dbReference type="PDBsum" id="8OJ5"/>
<dbReference type="PDBsum" id="8OJ8"/>
<dbReference type="PDBsum" id="8QFD"/>
<dbReference type="PDBsum" id="8QOI"/>
<dbReference type="PDBsum" id="8QYX"/>
<dbReference type="PDBsum" id="8RL2"/>
<dbReference type="PDBsum" id="8UKB"/>
<dbReference type="PDBsum" id="8XSX"/>
<dbReference type="PDBsum" id="8XSY"/>
<dbReference type="PDBsum" id="8XSZ"/>
<dbReference type="PDBsum" id="8Y0W"/>
<dbReference type="PDBsum" id="8Y0X"/>
<dbReference type="PDBsum" id="8YOO"/>
<dbReference type="PDBsum" id="8YOP"/>
<dbReference type="PDBsum" id="9C3H"/>
<dbReference type="PDBsum" id="9G8M"/>
<dbReference type="PDBsum" id="9GMO"/>
<dbReference type="EMDB" id="EMD-0948"/>
<dbReference type="EMDB" id="EMD-0963"/>
<dbReference type="EMDB" id="EMD-0964"/>
<dbReference type="EMDB" id="EMD-0978"/>
<dbReference type="EMDB" id="EMD-10668"/>
<dbReference type="EMDB" id="EMD-10674"/>
<dbReference type="EMDB" id="EMD-10690"/>
<dbReference type="EMDB" id="EMD-10709"/>
<dbReference type="EMDB" id="EMD-11098"/>
<dbReference type="EMDB" id="EMD-11099"/>
<dbReference type="EMDB" id="EMD-11100"/>
<dbReference type="EMDB" id="EMD-11288"/>
<dbReference type="EMDB" id="EMD-11289"/>
<dbReference type="EMDB" id="EMD-11292"/>
<dbReference type="EMDB" id="EMD-11299"/>
<dbReference type="EMDB" id="EMD-12189"/>
<dbReference type="EMDB" id="EMD-13094"/>
<dbReference type="EMDB" id="EMD-14181"/>
<dbReference type="EMDB" id="EMD-15113"/>
<dbReference type="EMDB" id="EMD-16880"/>
<dbReference type="EMDB" id="EMD-16902"/>
<dbReference type="EMDB" id="EMD-16905"/>
<dbReference type="EMDB" id="EMD-16908"/>
<dbReference type="EMDB" id="EMD-18382"/>
<dbReference type="EMDB" id="EMD-18539"/>
<dbReference type="EMDB" id="EMD-18765"/>
<dbReference type="EMDB" id="EMD-19330"/>
<dbReference type="EMDB" id="EMD-29254"/>
<dbReference type="EMDB" id="EMD-29255"/>
<dbReference type="EMDB" id="EMD-29256"/>
<dbReference type="EMDB" id="EMD-29257"/>
<dbReference type="EMDB" id="EMD-29258"/>
<dbReference type="EMDB" id="EMD-29259"/>
<dbReference type="EMDB" id="EMD-29260"/>
<dbReference type="EMDB" id="EMD-29261"/>
<dbReference type="EMDB" id="EMD-29262"/>
<dbReference type="EMDB" id="EMD-29263"/>
<dbReference type="EMDB" id="EMD-29265"/>
<dbReference type="EMDB" id="EMD-29266"/>
<dbReference type="EMDB" id="EMD-29267"/>
<dbReference type="EMDB" id="EMD-29268"/>
<dbReference type="EMDB" id="EMD-29269"/>
<dbReference type="EMDB" id="EMD-29271"/>
<dbReference type="EMDB" id="EMD-29272"/>
<dbReference type="EMDB" id="EMD-29273"/>
<dbReference type="EMDB" id="EMD-29274"/>
<dbReference type="EMDB" id="EMD-29275"/>
<dbReference type="EMDB" id="EMD-29276"/>
<dbReference type="EMDB" id="EMD-29277"/>
<dbReference type="EMDB" id="EMD-29757"/>
<dbReference type="EMDB" id="EMD-29758"/>
<dbReference type="EMDB" id="EMD-29759"/>
<dbReference type="EMDB" id="EMD-29760"/>
<dbReference type="EMDB" id="EMD-29771"/>
<dbReference type="EMDB" id="EMD-31465"/>
<dbReference type="EMDB" id="EMD-33329"/>
<dbReference type="EMDB" id="EMD-33330"/>
<dbReference type="EMDB" id="EMD-35370"/>
<dbReference type="EMDB" id="EMD-35371"/>
<dbReference type="EMDB" id="EMD-35375"/>
<dbReference type="EMDB" id="EMD-35413"/>
<dbReference type="EMDB" id="EMD-35414"/>
<dbReference type="EMDB" id="EMD-35596"/>
<dbReference type="EMDB" id="EMD-35597"/>
<dbReference type="EMDB" id="EMD-35599"/>
<dbReference type="EMDB" id="EMD-35639"/>
<dbReference type="EMDB" id="EMD-35649"/>
<dbReference type="EMDB" id="EMD-35651"/>
<dbReference type="EMDB" id="EMD-35672"/>
<dbReference type="EMDB" id="EMD-35673"/>
<dbReference type="EMDB" id="EMD-36178"/>
<dbReference type="EMDB" id="EMD-36179"/>
<dbReference type="EMDB" id="EMD-36180"/>
<dbReference type="EMDB" id="EMD-36181"/>
<dbReference type="EMDB" id="EMD-36838"/>
<dbReference type="EMDB" id="EMD-38629"/>
<dbReference type="EMDB" id="EMD-38630"/>
<dbReference type="EMDB" id="EMD-38631"/>
<dbReference type="EMDB" id="EMD-3883"/>
<dbReference type="EMDB" id="EMD-39455"/>
<dbReference type="EMDB" id="EMD-39456"/>
<dbReference type="EMDB" id="EMD-40205"/>
<dbReference type="EMDB" id="EMD-4070"/>
<dbReference type="EMDB" id="EMD-42351"/>
<dbReference type="EMDB" id="EMD-45170"/>
<dbReference type="EMDB" id="EMD-51132"/>
<dbReference type="EMDB" id="EMD-51452"/>
<dbReference type="EMDB" id="EMD-9701"/>
<dbReference type="EMDB" id="EMD-9702"/>
<dbReference type="EMDB" id="EMD-9703"/>
<dbReference type="SMR" id="P32969"/>
<dbReference type="BioGRID" id="112053">
    <property type="interactions" value="426"/>
</dbReference>
<dbReference type="ComplexPortal" id="CPX-5183">
    <property type="entry name" value="60S cytosolic large ribosomal subunit"/>
</dbReference>
<dbReference type="ComplexPortal" id="CPX-7664">
    <property type="entry name" value="60S cytosolic large ribosomal subunit, testis-specific variant"/>
</dbReference>
<dbReference type="ComplexPortal" id="CPX-7665">
    <property type="entry name" value="60S cytosolic large ribosomal subunit, striated muscle variant"/>
</dbReference>
<dbReference type="CORUM" id="P32969"/>
<dbReference type="FunCoup" id="P32969">
    <property type="interactions" value="1965"/>
</dbReference>
<dbReference type="IntAct" id="P32969">
    <property type="interactions" value="136"/>
</dbReference>
<dbReference type="MINT" id="P32969"/>
<dbReference type="STRING" id="9606.ENSP00000494697"/>
<dbReference type="GlyGen" id="P32969">
    <property type="glycosylation" value="1 site, 1 O-linked glycan (1 site)"/>
</dbReference>
<dbReference type="iPTMnet" id="P32969"/>
<dbReference type="MetOSite" id="P32969"/>
<dbReference type="PhosphoSitePlus" id="P32969"/>
<dbReference type="SwissPalm" id="P32969"/>
<dbReference type="BioMuta" id="RPL9"/>
<dbReference type="DMDM" id="417677"/>
<dbReference type="jPOST" id="P32969"/>
<dbReference type="MassIVE" id="P32969"/>
<dbReference type="PaxDb" id="9606-ENSP00000400467"/>
<dbReference type="PeptideAtlas" id="P32969"/>
<dbReference type="ProteomicsDB" id="54893"/>
<dbReference type="Pumba" id="P32969"/>
<dbReference type="TopDownProteomics" id="P32969"/>
<dbReference type="Antibodypedia" id="1250">
    <property type="antibodies" value="245 antibodies from 27 providers"/>
</dbReference>
<dbReference type="DNASU" id="6133"/>
<dbReference type="Ensembl" id="ENST00000295955.14">
    <property type="protein sequence ID" value="ENSP00000346022.7"/>
    <property type="gene ID" value="ENSG00000163682.17"/>
</dbReference>
<dbReference type="Ensembl" id="ENST00000449470.6">
    <property type="protein sequence ID" value="ENSP00000400467.2"/>
    <property type="gene ID" value="ENSG00000163682.17"/>
</dbReference>
<dbReference type="Ensembl" id="ENST00000645496.2">
    <property type="protein sequence ID" value="ENSP00000494697.1"/>
    <property type="gene ID" value="ENSG00000163682.17"/>
</dbReference>
<dbReference type="GeneID" id="6133"/>
<dbReference type="KEGG" id="hsa:6133"/>
<dbReference type="MANE-Select" id="ENST00000295955.14">
    <property type="protein sequence ID" value="ENSP00000346022.7"/>
    <property type="RefSeq nucleotide sequence ID" value="NM_000661.5"/>
    <property type="RefSeq protein sequence ID" value="NP_000652.2"/>
</dbReference>
<dbReference type="AGR" id="HGNC:10369"/>
<dbReference type="CTD" id="6133"/>
<dbReference type="DisGeNET" id="6133"/>
<dbReference type="GeneCards" id="RPL9"/>
<dbReference type="GeneCards" id="RPL9P7"/>
<dbReference type="GeneCards" id="RPL9P8"/>
<dbReference type="HGNC" id="HGNC:10369">
    <property type="gene designation" value="RPL9"/>
</dbReference>
<dbReference type="HPA" id="ENSG00000163682">
    <property type="expression patterns" value="Low tissue specificity"/>
</dbReference>
<dbReference type="MalaCards" id="RPL9"/>
<dbReference type="MIM" id="603686">
    <property type="type" value="gene"/>
</dbReference>
<dbReference type="neXtProt" id="NX_P32969"/>
<dbReference type="OpenTargets" id="ENSG00000163682"/>
<dbReference type="Orphanet" id="124">
    <property type="disease" value="Diamond-Blackfan anemia"/>
</dbReference>
<dbReference type="PharmGKB" id="PA34769"/>
<dbReference type="VEuPathDB" id="HostDB:ENSG00000163682"/>
<dbReference type="eggNOG" id="KOG3255">
    <property type="taxonomic scope" value="Eukaryota"/>
</dbReference>
<dbReference type="GeneTree" id="ENSGT00390000015224"/>
<dbReference type="InParanoid" id="P32969"/>
<dbReference type="OMA" id="YAHFPMK"/>
<dbReference type="OrthoDB" id="10252633at2759"/>
<dbReference type="PAN-GO" id="P32969">
    <property type="GO annotations" value="3 GO annotations based on evolutionary models"/>
</dbReference>
<dbReference type="PhylomeDB" id="P32969"/>
<dbReference type="TreeFam" id="TF300033"/>
<dbReference type="PathwayCommons" id="P32969"/>
<dbReference type="Reactome" id="R-HSA-156827">
    <property type="pathway name" value="L13a-mediated translational silencing of Ceruloplasmin expression"/>
</dbReference>
<dbReference type="Reactome" id="R-HSA-156902">
    <property type="pathway name" value="Peptide chain elongation"/>
</dbReference>
<dbReference type="Reactome" id="R-HSA-1799339">
    <property type="pathway name" value="SRP-dependent cotranslational protein targeting to membrane"/>
</dbReference>
<dbReference type="Reactome" id="R-HSA-192823">
    <property type="pathway name" value="Viral mRNA Translation"/>
</dbReference>
<dbReference type="Reactome" id="R-HSA-2408557">
    <property type="pathway name" value="Selenocysteine synthesis"/>
</dbReference>
<dbReference type="Reactome" id="R-HSA-6791226">
    <property type="pathway name" value="Major pathway of rRNA processing in the nucleolus and cytosol"/>
</dbReference>
<dbReference type="Reactome" id="R-HSA-72689">
    <property type="pathway name" value="Formation of a pool of free 40S subunits"/>
</dbReference>
<dbReference type="Reactome" id="R-HSA-72706">
    <property type="pathway name" value="GTP hydrolysis and joining of the 60S ribosomal subunit"/>
</dbReference>
<dbReference type="Reactome" id="R-HSA-72764">
    <property type="pathway name" value="Eukaryotic Translation Termination"/>
</dbReference>
<dbReference type="Reactome" id="R-HSA-9010553">
    <property type="pathway name" value="Regulation of expression of SLITs and ROBOs"/>
</dbReference>
<dbReference type="Reactome" id="R-HSA-9633012">
    <property type="pathway name" value="Response of EIF2AK4 (GCN2) to amino acid deficiency"/>
</dbReference>
<dbReference type="Reactome" id="R-HSA-975956">
    <property type="pathway name" value="Nonsense Mediated Decay (NMD) independent of the Exon Junction Complex (EJC)"/>
</dbReference>
<dbReference type="Reactome" id="R-HSA-975957">
    <property type="pathway name" value="Nonsense Mediated Decay (NMD) enhanced by the Exon Junction Complex (EJC)"/>
</dbReference>
<dbReference type="SignaLink" id="P32969"/>
<dbReference type="SIGNOR" id="P32969"/>
<dbReference type="BioGRID-ORCS" id="6133">
    <property type="hits" value="503 hits in 1151 CRISPR screens"/>
</dbReference>
<dbReference type="CD-CODE" id="91857CE7">
    <property type="entry name" value="Nucleolus"/>
</dbReference>
<dbReference type="CD-CODE" id="FB4E32DD">
    <property type="entry name" value="Presynaptic clusters and postsynaptic densities"/>
</dbReference>
<dbReference type="ChiTaRS" id="RPL9">
    <property type="organism name" value="human"/>
</dbReference>
<dbReference type="ChiTaRS" id="RPL9P8">
    <property type="organism name" value="human"/>
</dbReference>
<dbReference type="EvolutionaryTrace" id="P32969"/>
<dbReference type="GeneWiki" id="RPL9"/>
<dbReference type="GenomeRNAi" id="6133"/>
<dbReference type="Pharos" id="P32969">
    <property type="development level" value="Tbio"/>
</dbReference>
<dbReference type="PRO" id="PR:P32969"/>
<dbReference type="Proteomes" id="UP000005640">
    <property type="component" value="Chromosome 4"/>
</dbReference>
<dbReference type="RNAct" id="P32969">
    <property type="molecule type" value="protein"/>
</dbReference>
<dbReference type="Bgee" id="ENSG00000163682">
    <property type="expression patterns" value="Expressed in cortical plate and 114 other cell types or tissues"/>
</dbReference>
<dbReference type="ExpressionAtlas" id="P32969">
    <property type="expression patterns" value="baseline and differential"/>
</dbReference>
<dbReference type="GO" id="GO:0005737">
    <property type="term" value="C:cytoplasm"/>
    <property type="evidence" value="ECO:0000303"/>
    <property type="project" value="ComplexPortal"/>
</dbReference>
<dbReference type="GO" id="GO:0005829">
    <property type="term" value="C:cytosol"/>
    <property type="evidence" value="ECO:0000304"/>
    <property type="project" value="Reactome"/>
</dbReference>
<dbReference type="GO" id="GO:0022625">
    <property type="term" value="C:cytosolic large ribosomal subunit"/>
    <property type="evidence" value="ECO:0000314"/>
    <property type="project" value="UniProtKB"/>
</dbReference>
<dbReference type="GO" id="GO:0022626">
    <property type="term" value="C:cytosolic ribosome"/>
    <property type="evidence" value="ECO:0000314"/>
    <property type="project" value="FlyBase"/>
</dbReference>
<dbReference type="GO" id="GO:0005925">
    <property type="term" value="C:focal adhesion"/>
    <property type="evidence" value="ECO:0007005"/>
    <property type="project" value="UniProtKB"/>
</dbReference>
<dbReference type="GO" id="GO:0016020">
    <property type="term" value="C:membrane"/>
    <property type="evidence" value="ECO:0007005"/>
    <property type="project" value="UniProtKB"/>
</dbReference>
<dbReference type="GO" id="GO:0005634">
    <property type="term" value="C:nucleus"/>
    <property type="evidence" value="ECO:0007005"/>
    <property type="project" value="UniProtKB"/>
</dbReference>
<dbReference type="GO" id="GO:0005840">
    <property type="term" value="C:ribosome"/>
    <property type="evidence" value="ECO:0000304"/>
    <property type="project" value="ProtInc"/>
</dbReference>
<dbReference type="GO" id="GO:0003723">
    <property type="term" value="F:RNA binding"/>
    <property type="evidence" value="ECO:0000304"/>
    <property type="project" value="ProtInc"/>
</dbReference>
<dbReference type="GO" id="GO:0019843">
    <property type="term" value="F:rRNA binding"/>
    <property type="evidence" value="ECO:0007669"/>
    <property type="project" value="InterPro"/>
</dbReference>
<dbReference type="GO" id="GO:0003735">
    <property type="term" value="F:structural constituent of ribosome"/>
    <property type="evidence" value="ECO:0000314"/>
    <property type="project" value="UniProtKB"/>
</dbReference>
<dbReference type="GO" id="GO:0002181">
    <property type="term" value="P:cytoplasmic translation"/>
    <property type="evidence" value="ECO:0000318"/>
    <property type="project" value="GO_Central"/>
</dbReference>
<dbReference type="GO" id="GO:0006412">
    <property type="term" value="P:translation"/>
    <property type="evidence" value="ECO:0000304"/>
    <property type="project" value="ProtInc"/>
</dbReference>
<dbReference type="FunFam" id="3.90.930.12:FF:000003">
    <property type="entry name" value="60S ribosomal protein L9"/>
    <property type="match status" value="1"/>
</dbReference>
<dbReference type="FunFam" id="3.90.930.12:FF:000005">
    <property type="entry name" value="60S ribosomal protein L9"/>
    <property type="match status" value="1"/>
</dbReference>
<dbReference type="Gene3D" id="3.90.930.12">
    <property type="entry name" value="Ribosomal protein L6, alpha-beta domain"/>
    <property type="match status" value="2"/>
</dbReference>
<dbReference type="InterPro" id="IPR000702">
    <property type="entry name" value="Ribosomal_uL6-like"/>
</dbReference>
<dbReference type="InterPro" id="IPR036789">
    <property type="entry name" value="Ribosomal_uL6-like_a/b-dom_sf"/>
</dbReference>
<dbReference type="InterPro" id="IPR020040">
    <property type="entry name" value="Ribosomal_uL6_a/b-dom"/>
</dbReference>
<dbReference type="InterPro" id="IPR002359">
    <property type="entry name" value="Ribosomal_uL6_CS2"/>
</dbReference>
<dbReference type="PANTHER" id="PTHR11655">
    <property type="entry name" value="60S/50S RIBOSOMAL PROTEIN L6/L9"/>
    <property type="match status" value="1"/>
</dbReference>
<dbReference type="PANTHER" id="PTHR11655:SF46">
    <property type="entry name" value="LARGE RIBOSOMAL SUBUNIT PROTEIN UL6"/>
    <property type="match status" value="1"/>
</dbReference>
<dbReference type="Pfam" id="PF00347">
    <property type="entry name" value="Ribosomal_L6"/>
    <property type="match status" value="2"/>
</dbReference>
<dbReference type="PIRSF" id="PIRSF002162">
    <property type="entry name" value="Ribosomal_L6"/>
    <property type="match status" value="1"/>
</dbReference>
<dbReference type="SUPFAM" id="SSF56053">
    <property type="entry name" value="Ribosomal protein L6"/>
    <property type="match status" value="2"/>
</dbReference>
<dbReference type="PROSITE" id="PS00700">
    <property type="entry name" value="RIBOSOMAL_L6_2"/>
    <property type="match status" value="1"/>
</dbReference>
<evidence type="ECO:0000269" key="1">
    <source>
    </source>
</evidence>
<evidence type="ECO:0000269" key="2">
    <source>
    </source>
</evidence>
<evidence type="ECO:0000303" key="3">
    <source>
    </source>
</evidence>
<evidence type="ECO:0000305" key="4"/>
<evidence type="ECO:0007744" key="5">
    <source>
        <dbReference type="PDB" id="6LQM"/>
    </source>
</evidence>
<evidence type="ECO:0007744" key="6">
    <source>
        <dbReference type="PDB" id="6LSR"/>
    </source>
</evidence>
<evidence type="ECO:0007744" key="7">
    <source>
        <dbReference type="PDB" id="6LSS"/>
    </source>
</evidence>
<evidence type="ECO:0007744" key="8">
    <source>
        <dbReference type="PDB" id="6LU8"/>
    </source>
</evidence>
<evidence type="ECO:0007744" key="9">
    <source>
    </source>
</evidence>
<evidence type="ECO:0007829" key="10">
    <source>
        <dbReference type="PDB" id="2CQL"/>
    </source>
</evidence>
<name>RL9_HUMAN</name>
<keyword id="KW-0002">3D-structure</keyword>
<keyword id="KW-0007">Acetylation</keyword>
<keyword id="KW-0963">Cytoplasm</keyword>
<keyword id="KW-0903">Direct protein sequencing</keyword>
<keyword id="KW-1267">Proteomics identification</keyword>
<keyword id="KW-1185">Reference proteome</keyword>
<keyword id="KW-0687">Ribonucleoprotein</keyword>
<keyword id="KW-0689">Ribosomal protein</keyword>
<protein>
    <recommendedName>
        <fullName evidence="3">Large ribosomal subunit protein uL6</fullName>
    </recommendedName>
    <alternativeName>
        <fullName>60S ribosomal protein L9</fullName>
    </alternativeName>
</protein>
<accession>P32969</accession>
<feature type="chain" id="PRO_0000131097" description="Large ribosomal subunit protein uL6">
    <location>
        <begin position="1"/>
        <end position="192"/>
    </location>
</feature>
<feature type="modified residue" description="N6-acetyllysine" evidence="9">
    <location>
        <position position="121"/>
    </location>
</feature>
<feature type="sequence conflict" description="In Ref. 2; AAB01040/AAB01041." evidence="4" ref="2">
    <original>D</original>
    <variation>E</variation>
    <location>
        <position position="11"/>
    </location>
</feature>
<feature type="strand" evidence="10">
    <location>
        <begin position="8"/>
        <end position="10"/>
    </location>
</feature>
<feature type="strand" evidence="10">
    <location>
        <begin position="17"/>
        <end position="21"/>
    </location>
</feature>
<feature type="strand" evidence="10">
    <location>
        <begin position="24"/>
        <end position="29"/>
    </location>
</feature>
<feature type="strand" evidence="10">
    <location>
        <begin position="32"/>
        <end position="37"/>
    </location>
</feature>
<feature type="strand" evidence="10">
    <location>
        <begin position="44"/>
        <end position="48"/>
    </location>
</feature>
<feature type="strand" evidence="10">
    <location>
        <begin position="50"/>
        <end position="52"/>
    </location>
</feature>
<feature type="strand" evidence="10">
    <location>
        <begin position="54"/>
        <end position="58"/>
    </location>
</feature>
<feature type="strand" evidence="10">
    <location>
        <begin position="61"/>
        <end position="63"/>
    </location>
</feature>
<feature type="helix" evidence="10">
    <location>
        <begin position="65"/>
        <end position="85"/>
    </location>
</feature>
<organism>
    <name type="scientific">Homo sapiens</name>
    <name type="common">Human</name>
    <dbReference type="NCBI Taxonomy" id="9606"/>
    <lineage>
        <taxon>Eukaryota</taxon>
        <taxon>Metazoa</taxon>
        <taxon>Chordata</taxon>
        <taxon>Craniata</taxon>
        <taxon>Vertebrata</taxon>
        <taxon>Euteleostomi</taxon>
        <taxon>Mammalia</taxon>
        <taxon>Eutheria</taxon>
        <taxon>Euarchontoglires</taxon>
        <taxon>Primates</taxon>
        <taxon>Haplorrhini</taxon>
        <taxon>Catarrhini</taxon>
        <taxon>Hominidae</taxon>
        <taxon>Homo</taxon>
    </lineage>
</organism>